<sequence>MATQGSKEKKGYPELKEVIKTTCKIKVGPGKETLTEGNCLWALKTLDFIFEDIKTEPWTLTKMYTVWEKLKQVTPEETSKREFASLQATLACIMCSQMGMRPETVQAARGIISMKEGLHEKQEDKEKKVEQLYPNLEKHREVYPIVNLQAGGRSWKAVESVTFQQLQTVAMQHGLVSEDFERQLAYYATTWTSKDILEVLAMMPGNRAQKELIQGKLNEEAERWVRQNPPGPNVLTVDQIMGVGQTNQQASQANMDQARQLCLQWVITALRSVRHMSHRPGNPMLIKQKNSESYEDFIARLLEAIDTEPVTDPIKTYLKVTLSFTNASTDCQKQMDRVLGTRVQQASVEEKMQACRDVGSEGFKMQLLAQALRPPRKEGKQGVQKCYYCGKPGHLARQCRQGIICHHCGKRGHMQKDCRQKKGNPTSQQGNSRRGPRVVPSAPPML</sequence>
<proteinExistence type="inferred from homology"/>
<reference key="1">
    <citation type="journal article" date="1990" name="Virology">
        <title>Nucleotide sequence analysis of SA-OMVV, a visna-related ovine lentivirus: phylogenetic history of lentiviruses.</title>
        <authorList>
            <person name="Querat G."/>
            <person name="Audoly G."/>
            <person name="Sonigo P."/>
            <person name="Vigne R."/>
        </authorList>
    </citation>
    <scope>NUCLEOTIDE SEQUENCE [GENOMIC DNA]</scope>
</reference>
<gene>
    <name type="primary">gag</name>
</gene>
<evidence type="ECO:0000250" key="1"/>
<evidence type="ECO:0000255" key="2">
    <source>
        <dbReference type="PROSITE-ProRule" id="PRU00047"/>
    </source>
</evidence>
<evidence type="ECO:0000256" key="3">
    <source>
        <dbReference type="SAM" id="MobiDB-lite"/>
    </source>
</evidence>
<evidence type="ECO:0000305" key="4"/>
<feature type="chain" id="PRO_0000038796" description="Matrix protein p16">
    <location>
        <begin position="1"/>
        <end position="143"/>
    </location>
</feature>
<feature type="chain" id="PRO_0000038797" description="Capsid protein p25">
    <location>
        <begin position="144"/>
        <end position="363"/>
    </location>
</feature>
<feature type="chain" id="PRO_0000038798" description="Nucleocapsid protein p14">
    <location>
        <begin position="364"/>
        <end position="446"/>
    </location>
</feature>
<feature type="zinc finger region" description="CCHC-type 1" evidence="2">
    <location>
        <begin position="384"/>
        <end position="401"/>
    </location>
</feature>
<feature type="zinc finger region" description="CCHC-type 2" evidence="2">
    <location>
        <begin position="403"/>
        <end position="420"/>
    </location>
</feature>
<feature type="region of interest" description="Disordered" evidence="3">
    <location>
        <begin position="415"/>
        <end position="446"/>
    </location>
</feature>
<feature type="short sequence motif" description="PTAP/PSAP motif">
    <location>
        <begin position="440"/>
        <end position="443"/>
    </location>
</feature>
<feature type="compositionally biased region" description="Polar residues" evidence="3">
    <location>
        <begin position="423"/>
        <end position="432"/>
    </location>
</feature>
<accession>P16900</accession>
<comment type="subcellular location">
    <molecule>Matrix protein p16</molecule>
    <subcellularLocation>
        <location evidence="4">Virion</location>
    </subcellularLocation>
</comment>
<comment type="subcellular location">
    <molecule>Capsid protein p25</molecule>
    <subcellularLocation>
        <location evidence="4">Virion</location>
    </subcellularLocation>
</comment>
<comment type="subcellular location">
    <molecule>Nucleocapsid protein p14</molecule>
    <subcellularLocation>
        <location evidence="4">Virion</location>
    </subcellularLocation>
</comment>
<comment type="domain">
    <text evidence="1">Late-budding domains (L domains) are short sequence motifs essential for viral particle budding. They recruit proteins of the host ESCRT machinery (Endosomal Sorting Complex Required for Transport) or ESCRT-associated proteins. Nucleocapsid protein p14 contains one L domain: a PTAP/PSAP motif, which interacts with the UEV domain of TSG101 (By similarity).</text>
</comment>
<comment type="PTM">
    <text>Specific enzymatic cleavages in vivo yield mature proteins.</text>
</comment>
<comment type="similarity">
    <text evidence="4">Belongs to the Ovine/caprine lentivirus group gag polyprotein family.</text>
</comment>
<organism>
    <name type="scientific">Ovine maedi visna related virus (strain South Africa)</name>
    <name type="common">SA-OMVV</name>
    <name type="synonym">Ovine lentivirus</name>
    <dbReference type="NCBI Taxonomy" id="11664"/>
    <lineage>
        <taxon>Viruses</taxon>
        <taxon>Riboviria</taxon>
        <taxon>Pararnavirae</taxon>
        <taxon>Artverviricota</taxon>
        <taxon>Revtraviricetes</taxon>
        <taxon>Ortervirales</taxon>
        <taxon>Retroviridae</taxon>
        <taxon>Orthoretrovirinae</taxon>
        <taxon>Lentivirus</taxon>
        <taxon>Visna-maedi virus</taxon>
    </lineage>
</organism>
<dbReference type="EMBL" id="M34193">
    <property type="protein sequence ID" value="AAA46779.1"/>
    <property type="molecule type" value="Genomic_DNA"/>
</dbReference>
<dbReference type="EMBL" id="M31646">
    <property type="protein sequence ID" value="AAA66811.1"/>
    <property type="molecule type" value="Genomic_RNA"/>
</dbReference>
<dbReference type="RefSeq" id="NP_041249.1">
    <property type="nucleotide sequence ID" value="NC_001511.1"/>
</dbReference>
<dbReference type="SMR" id="P16900"/>
<dbReference type="KEGG" id="vg:1489982"/>
<dbReference type="Proteomes" id="UP000243523">
    <property type="component" value="Segment"/>
</dbReference>
<dbReference type="GO" id="GO:0019028">
    <property type="term" value="C:viral capsid"/>
    <property type="evidence" value="ECO:0007669"/>
    <property type="project" value="UniProtKB-KW"/>
</dbReference>
<dbReference type="GO" id="GO:0003676">
    <property type="term" value="F:nucleic acid binding"/>
    <property type="evidence" value="ECO:0007669"/>
    <property type="project" value="InterPro"/>
</dbReference>
<dbReference type="GO" id="GO:0008270">
    <property type="term" value="F:zinc ion binding"/>
    <property type="evidence" value="ECO:0007669"/>
    <property type="project" value="UniProtKB-KW"/>
</dbReference>
<dbReference type="GO" id="GO:0039702">
    <property type="term" value="P:viral budding via host ESCRT complex"/>
    <property type="evidence" value="ECO:0007669"/>
    <property type="project" value="UniProtKB-KW"/>
</dbReference>
<dbReference type="Gene3D" id="1.10.1200.30">
    <property type="match status" value="1"/>
</dbReference>
<dbReference type="Gene3D" id="1.10.375.10">
    <property type="entry name" value="Human Immunodeficiency Virus Type 1 Capsid Protein"/>
    <property type="match status" value="1"/>
</dbReference>
<dbReference type="Gene3D" id="1.10.150.90">
    <property type="entry name" value="Immunodeficiency lentiviruses, gag gene matrix protein p17"/>
    <property type="match status" value="1"/>
</dbReference>
<dbReference type="Gene3D" id="4.10.60.10">
    <property type="entry name" value="Zinc finger, CCHC-type"/>
    <property type="match status" value="1"/>
</dbReference>
<dbReference type="InterPro" id="IPR045345">
    <property type="entry name" value="Gag_p24_C"/>
</dbReference>
<dbReference type="InterPro" id="IPR012344">
    <property type="entry name" value="Matrix_HIV/RSV_N"/>
</dbReference>
<dbReference type="InterPro" id="IPR050195">
    <property type="entry name" value="Primate_lentivir_Gag_pol-like"/>
</dbReference>
<dbReference type="InterPro" id="IPR008916">
    <property type="entry name" value="Retrov_capsid_C"/>
</dbReference>
<dbReference type="InterPro" id="IPR008919">
    <property type="entry name" value="Retrov_capsid_N"/>
</dbReference>
<dbReference type="InterPro" id="IPR001878">
    <property type="entry name" value="Znf_CCHC"/>
</dbReference>
<dbReference type="InterPro" id="IPR036875">
    <property type="entry name" value="Znf_CCHC_sf"/>
</dbReference>
<dbReference type="PANTHER" id="PTHR40389">
    <property type="entry name" value="ENDOGENOUS RETROVIRUS GROUP K MEMBER 24 GAG POLYPROTEIN-RELATED"/>
    <property type="match status" value="1"/>
</dbReference>
<dbReference type="PANTHER" id="PTHR40389:SF3">
    <property type="entry name" value="IGE-BINDING PROTEIN"/>
    <property type="match status" value="1"/>
</dbReference>
<dbReference type="Pfam" id="PF00607">
    <property type="entry name" value="Gag_p24"/>
    <property type="match status" value="1"/>
</dbReference>
<dbReference type="Pfam" id="PF19317">
    <property type="entry name" value="Gag_p24_C"/>
    <property type="match status" value="1"/>
</dbReference>
<dbReference type="Pfam" id="PF00098">
    <property type="entry name" value="zf-CCHC"/>
    <property type="match status" value="2"/>
</dbReference>
<dbReference type="SMART" id="SM00343">
    <property type="entry name" value="ZnF_C2HC"/>
    <property type="match status" value="2"/>
</dbReference>
<dbReference type="SUPFAM" id="SSF47353">
    <property type="entry name" value="Retrovirus capsid dimerization domain-like"/>
    <property type="match status" value="1"/>
</dbReference>
<dbReference type="SUPFAM" id="SSF47943">
    <property type="entry name" value="Retrovirus capsid protein, N-terminal core domain"/>
    <property type="match status" value="1"/>
</dbReference>
<dbReference type="SUPFAM" id="SSF57756">
    <property type="entry name" value="Retrovirus zinc finger-like domains"/>
    <property type="match status" value="1"/>
</dbReference>
<dbReference type="PROSITE" id="PS50158">
    <property type="entry name" value="ZF_CCHC"/>
    <property type="match status" value="2"/>
</dbReference>
<protein>
    <recommendedName>
        <fullName>Gag polyprotein</fullName>
    </recommendedName>
    <component>
        <recommendedName>
            <fullName>Matrix protein p16</fullName>
        </recommendedName>
    </component>
    <component>
        <recommendedName>
            <fullName>Capsid protein p25</fullName>
        </recommendedName>
    </component>
    <component>
        <recommendedName>
            <fullName>Nucleocapsid protein p14</fullName>
        </recommendedName>
    </component>
</protein>
<organismHost>
    <name type="scientific">Ovis aries</name>
    <name type="common">Sheep</name>
    <dbReference type="NCBI Taxonomy" id="9940"/>
</organismHost>
<name>GAG_OMVVS</name>
<keyword id="KW-0167">Capsid protein</keyword>
<keyword id="KW-0945">Host-virus interaction</keyword>
<keyword id="KW-0479">Metal-binding</keyword>
<keyword id="KW-0677">Repeat</keyword>
<keyword id="KW-1198">Viral budding</keyword>
<keyword id="KW-1187">Viral budding via the host ESCRT complexes</keyword>
<keyword id="KW-1188">Viral release from host cell</keyword>
<keyword id="KW-0946">Virion</keyword>
<keyword id="KW-0862">Zinc</keyword>
<keyword id="KW-0863">Zinc-finger</keyword>